<organism>
    <name type="scientific">Gallus gallus</name>
    <name type="common">Chicken</name>
    <dbReference type="NCBI Taxonomy" id="9031"/>
    <lineage>
        <taxon>Eukaryota</taxon>
        <taxon>Metazoa</taxon>
        <taxon>Chordata</taxon>
        <taxon>Craniata</taxon>
        <taxon>Vertebrata</taxon>
        <taxon>Euteleostomi</taxon>
        <taxon>Archelosauria</taxon>
        <taxon>Archosauria</taxon>
        <taxon>Dinosauria</taxon>
        <taxon>Saurischia</taxon>
        <taxon>Theropoda</taxon>
        <taxon>Coelurosauria</taxon>
        <taxon>Aves</taxon>
        <taxon>Neognathae</taxon>
        <taxon>Galloanserae</taxon>
        <taxon>Galliformes</taxon>
        <taxon>Phasianidae</taxon>
        <taxon>Phasianinae</taxon>
        <taxon>Gallus</taxon>
    </lineage>
</organism>
<dbReference type="EMBL" id="AJ719565">
    <property type="protein sequence ID" value="CAG31224.1"/>
    <property type="molecule type" value="mRNA"/>
</dbReference>
<dbReference type="RefSeq" id="NP_001012823.1">
    <property type="nucleotide sequence ID" value="NM_001012805.1"/>
</dbReference>
<dbReference type="SMR" id="Q5ZM19"/>
<dbReference type="FunCoup" id="Q5ZM19">
    <property type="interactions" value="2437"/>
</dbReference>
<dbReference type="STRING" id="9031.ENSGALP00000004171"/>
<dbReference type="PaxDb" id="9031-ENSGALP00000004171"/>
<dbReference type="GeneID" id="417552"/>
<dbReference type="KEGG" id="gga:417552"/>
<dbReference type="CTD" id="55421"/>
<dbReference type="VEuPathDB" id="HostDB:geneid_417552"/>
<dbReference type="eggNOG" id="ENOG502QRX4">
    <property type="taxonomic scope" value="Eukaryota"/>
</dbReference>
<dbReference type="InParanoid" id="Q5ZM19"/>
<dbReference type="OrthoDB" id="422106at2759"/>
<dbReference type="PhylomeDB" id="Q5ZM19"/>
<dbReference type="PRO" id="PR:Q5ZM19"/>
<dbReference type="Proteomes" id="UP000000539">
    <property type="component" value="Unassembled WGS sequence"/>
</dbReference>
<dbReference type="GO" id="GO:0005737">
    <property type="term" value="C:cytoplasm"/>
    <property type="evidence" value="ECO:0000250"/>
    <property type="project" value="UniProtKB"/>
</dbReference>
<dbReference type="GO" id="GO:0005634">
    <property type="term" value="C:nucleus"/>
    <property type="evidence" value="ECO:0000250"/>
    <property type="project" value="UniProtKB"/>
</dbReference>
<dbReference type="GO" id="GO:0003729">
    <property type="term" value="F:mRNA binding"/>
    <property type="evidence" value="ECO:0000250"/>
    <property type="project" value="UniProtKB"/>
</dbReference>
<dbReference type="GO" id="GO:0000340">
    <property type="term" value="F:RNA 7-methylguanosine cap binding"/>
    <property type="evidence" value="ECO:0000250"/>
    <property type="project" value="UniProtKB"/>
</dbReference>
<dbReference type="GO" id="GO:0000339">
    <property type="term" value="F:RNA cap binding"/>
    <property type="evidence" value="ECO:0000318"/>
    <property type="project" value="GO_Central"/>
</dbReference>
<dbReference type="GO" id="GO:0006370">
    <property type="term" value="P:7-methylguanosine mRNA capping"/>
    <property type="evidence" value="ECO:0007669"/>
    <property type="project" value="UniProtKB-KW"/>
</dbReference>
<dbReference type="GO" id="GO:0051028">
    <property type="term" value="P:mRNA transport"/>
    <property type="evidence" value="ECO:0007669"/>
    <property type="project" value="UniProtKB-KW"/>
</dbReference>
<dbReference type="Gene3D" id="3.30.70.330">
    <property type="match status" value="1"/>
</dbReference>
<dbReference type="InterPro" id="IPR019416">
    <property type="entry name" value="NCBP3"/>
</dbReference>
<dbReference type="InterPro" id="IPR012677">
    <property type="entry name" value="Nucleotide-bd_a/b_plait_sf"/>
</dbReference>
<dbReference type="PANTHER" id="PTHR16291">
    <property type="entry name" value="NUCLEAR CAP-BINDING PROTEIN SUBUNIT 3"/>
    <property type="match status" value="1"/>
</dbReference>
<dbReference type="PANTHER" id="PTHR16291:SF0">
    <property type="entry name" value="NUCLEAR CAP-BINDING PROTEIN SUBUNIT 3"/>
    <property type="match status" value="1"/>
</dbReference>
<dbReference type="Pfam" id="PF10309">
    <property type="entry name" value="NCBP3"/>
    <property type="match status" value="1"/>
</dbReference>
<evidence type="ECO:0000250" key="1">
    <source>
        <dbReference type="UniProtKB" id="Q53F19"/>
    </source>
</evidence>
<evidence type="ECO:0000256" key="2">
    <source>
        <dbReference type="SAM" id="MobiDB-lite"/>
    </source>
</evidence>
<evidence type="ECO:0000305" key="3"/>
<protein>
    <recommendedName>
        <fullName evidence="1">Nuclear cap-binding protein subunit 3</fullName>
    </recommendedName>
</protein>
<feature type="chain" id="PRO_0000308584" description="Nuclear cap-binding protein subunit 3">
    <location>
        <begin position="1"/>
        <end position="604"/>
    </location>
</feature>
<feature type="region of interest" description="Disordered" evidence="2">
    <location>
        <begin position="1"/>
        <end position="36"/>
    </location>
</feature>
<feature type="region of interest" description="RNA recognition motif (RRM) domain" evidence="1">
    <location>
        <begin position="116"/>
        <end position="177"/>
    </location>
</feature>
<feature type="region of interest" description="Disordered" evidence="2">
    <location>
        <begin position="168"/>
        <end position="219"/>
    </location>
</feature>
<feature type="region of interest" description="Disordered" evidence="2">
    <location>
        <begin position="319"/>
        <end position="383"/>
    </location>
</feature>
<feature type="region of interest" description="Disordered" evidence="2">
    <location>
        <begin position="457"/>
        <end position="604"/>
    </location>
</feature>
<feature type="short sequence motif" description="WLDD motif; essential for 7-methylguanosine-containing mRNA cap binding" evidence="1">
    <location>
        <begin position="145"/>
        <end position="148"/>
    </location>
</feature>
<feature type="compositionally biased region" description="Basic and acidic residues" evidence="2">
    <location>
        <begin position="173"/>
        <end position="198"/>
    </location>
</feature>
<feature type="compositionally biased region" description="Acidic residues" evidence="2">
    <location>
        <begin position="199"/>
        <end position="219"/>
    </location>
</feature>
<feature type="compositionally biased region" description="Acidic residues" evidence="2">
    <location>
        <begin position="331"/>
        <end position="349"/>
    </location>
</feature>
<feature type="compositionally biased region" description="Basic and acidic residues" evidence="2">
    <location>
        <begin position="350"/>
        <end position="370"/>
    </location>
</feature>
<feature type="compositionally biased region" description="Polar residues" evidence="2">
    <location>
        <begin position="458"/>
        <end position="469"/>
    </location>
</feature>
<feature type="compositionally biased region" description="Basic and acidic residues" evidence="2">
    <location>
        <begin position="495"/>
        <end position="505"/>
    </location>
</feature>
<feature type="compositionally biased region" description="Basic and acidic residues" evidence="2">
    <location>
        <begin position="539"/>
        <end position="548"/>
    </location>
</feature>
<feature type="compositionally biased region" description="Basic and acidic residues" evidence="2">
    <location>
        <begin position="569"/>
        <end position="582"/>
    </location>
</feature>
<feature type="compositionally biased region" description="Low complexity" evidence="2">
    <location>
        <begin position="595"/>
        <end position="604"/>
    </location>
</feature>
<name>NCBP3_CHICK</name>
<sequence length="604" mass="68726">MAAVRGLRISVKAEATATTAEPRGPEPEPMEVEEGELETIPVRRSLRELIPDTSRRYENKAGSFITGIDVTSKEAIEKKEQRAKRFHFRAEVNLAQRNVALDRDMMKKAIPKVRLDTIYICGVDEMSTQDIFAYFKEYPPAHIEWLDDTSCNVVWLDEVTATRALINMSSFPDQEKPKGGENNEEKTAEKNKKEKQEESTDDETEEGEVEDENPSDIELDALTQVEEDSLLRNDLRPANKLAKGNKLFMRFATKDDKKELGAARRSQYYMKYGNPNYGGMKGILSNSWKRRYHSRRIHRDVIKKRTLIGDDVGLTPPYKHRHSGLVNVPEEPIEEEEEEEEVQDMDEDDRVVVEYRDDLQPFKQSRDRGAARRSSASASDSDEMDYDLELKMISTPSPKKSMKMTMYADEVESQLKNIRNSMRADSIATSNVKNRIGSKGLSDKVVDVRLLLEEKRQNNNGLRQPNSIVKSDVRQRLGKRPHSPEVKPPSSISAPRREPISDVHSRLGIPKQDVKGLYSDTREKKSGNLWTRLGSAPKTQEKTSDKPENSVASPEEDDSELQRVWGALIKEKGESRQKKSRLDNLPSLQIEISRESSSGSDTES</sequence>
<comment type="function">
    <text evidence="1">Associates with NCBP1/CBP80 to form an alternative cap-binding complex (CBC) which plays a key role in mRNA export. NCBP3 serves as adapter protein linking the capped RNAs (m7GpppG-capped RNA) to NCBP1/CBP80. Unlike the conventional CBC with NCBP2 which binds both small nuclear RNA (snRNA) and messenger (mRNA) and is involved in their export from the nucleus, the alternative CBC with NCBP3 does not bind snRNA and associates only with mRNA thereby playing a role in only mRNA export.</text>
</comment>
<comment type="subunit">
    <text evidence="1">Component of an alternative cap-binding complex (CBC) composed of NCBP1/CBP80 and NCBP3.</text>
</comment>
<comment type="subcellular location">
    <subcellularLocation>
        <location evidence="1">Nucleus</location>
    </subcellularLocation>
    <subcellularLocation>
        <location evidence="1">Cytoplasm</location>
    </subcellularLocation>
</comment>
<comment type="similarity">
    <text evidence="3">Belongs to the NCBP3 family.</text>
</comment>
<reference key="1">
    <citation type="journal article" date="2005" name="Genome Biol.">
        <title>Full-length cDNAs from chicken bursal lymphocytes to facilitate gene function analysis.</title>
        <authorList>
            <person name="Caldwell R.B."/>
            <person name="Kierzek A.M."/>
            <person name="Arakawa H."/>
            <person name="Bezzubov Y."/>
            <person name="Zaim J."/>
            <person name="Fiedler P."/>
            <person name="Kutter S."/>
            <person name="Blagodatski A."/>
            <person name="Kostovska D."/>
            <person name="Koter M."/>
            <person name="Plachy J."/>
            <person name="Carninci P."/>
            <person name="Hayashizaki Y."/>
            <person name="Buerstedde J.-M."/>
        </authorList>
    </citation>
    <scope>NUCLEOTIDE SEQUENCE [LARGE SCALE MRNA]</scope>
    <source>
        <strain>CB</strain>
        <tissue>Bursa of Fabricius</tissue>
    </source>
</reference>
<proteinExistence type="evidence at transcript level"/>
<gene>
    <name evidence="1" type="primary">NCBP3</name>
    <name type="ORF">RCJMB04_3g9</name>
</gene>
<keyword id="KW-0963">Cytoplasm</keyword>
<keyword id="KW-0506">mRNA capping</keyword>
<keyword id="KW-0507">mRNA processing</keyword>
<keyword id="KW-0509">mRNA transport</keyword>
<keyword id="KW-0539">Nucleus</keyword>
<keyword id="KW-1185">Reference proteome</keyword>
<keyword id="KW-0694">RNA-binding</keyword>
<keyword id="KW-0813">Transport</keyword>
<accession>Q5ZM19</accession>